<sequence>MIWHVQNENFILDSTRIFMKAFHLLLFDGSLIFPECILIFGLILLLMIDSTSDQKDIPWLYFISSTSLVMSITALLFRWREEPMISFSGNFQTNNFNEIFQFLILLCSTLCIPLSVEYIECTEMAITEFLLFVLTATLGGMFLCGANDLITIFVAPECFSLCSYLLSGYTKKDVRSNEATMKYLLMGGASSSILVHGFSWLYGSSGGEIELQEIVNGLINTQMYNSPGISIALIFITVGIGFKLSPAPSHQWTPDVYEGSPTPVVAFLSVTSKVAASASATRIFDIPFYFSSNEWHLLLEILAILSMILGNLIAITQTSMKRMLAYSSIGQIGYVIIGIIVGDSNDGYASMITYMLFYISMNLGTFACIVLFGLRTGTDNIRDYAGLYTKDPFLALSLALCLLSLGGLPPLAGFFGKLYLFWCGWQAGLYFLVLIGLLTSVVSIYYYLKIIKLLMTGRNQEITPHVRNYRRSPLRSNNSIELSMIVCVIASTIPGISMNPIIAIAQDSLF</sequence>
<geneLocation type="chloroplast"/>
<evidence type="ECO:0000255" key="1">
    <source>
        <dbReference type="HAMAP-Rule" id="MF_00445"/>
    </source>
</evidence>
<keyword id="KW-0150">Chloroplast</keyword>
<keyword id="KW-0472">Membrane</keyword>
<keyword id="KW-0520">NAD</keyword>
<keyword id="KW-0521">NADP</keyword>
<keyword id="KW-0934">Plastid</keyword>
<keyword id="KW-0618">Plastoquinone</keyword>
<keyword id="KW-0874">Quinone</keyword>
<keyword id="KW-0793">Thylakoid</keyword>
<keyword id="KW-1278">Translocase</keyword>
<keyword id="KW-0812">Transmembrane</keyword>
<keyword id="KW-1133">Transmembrane helix</keyword>
<keyword id="KW-0813">Transport</keyword>
<organism>
    <name type="scientific">Atropa belladonna</name>
    <name type="common">Belladonna</name>
    <name type="synonym">Deadly nightshade</name>
    <dbReference type="NCBI Taxonomy" id="33113"/>
    <lineage>
        <taxon>Eukaryota</taxon>
        <taxon>Viridiplantae</taxon>
        <taxon>Streptophyta</taxon>
        <taxon>Embryophyta</taxon>
        <taxon>Tracheophyta</taxon>
        <taxon>Spermatophyta</taxon>
        <taxon>Magnoliopsida</taxon>
        <taxon>eudicotyledons</taxon>
        <taxon>Gunneridae</taxon>
        <taxon>Pentapetalae</taxon>
        <taxon>asterids</taxon>
        <taxon>lamiids</taxon>
        <taxon>Solanales</taxon>
        <taxon>Solanaceae</taxon>
        <taxon>Solanoideae</taxon>
        <taxon>Hyoscyameae</taxon>
        <taxon>Atropa</taxon>
    </lineage>
</organism>
<proteinExistence type="inferred from homology"/>
<feature type="chain" id="PRO_0000391255" description="NAD(P)H-quinone oxidoreductase subunit 2 B, chloroplastic">
    <location>
        <begin position="1"/>
        <end position="510"/>
    </location>
</feature>
<feature type="transmembrane region" description="Helical" evidence="1">
    <location>
        <begin position="24"/>
        <end position="44"/>
    </location>
</feature>
<feature type="transmembrane region" description="Helical" evidence="1">
    <location>
        <begin position="57"/>
        <end position="77"/>
    </location>
</feature>
<feature type="transmembrane region" description="Helical" evidence="1">
    <location>
        <begin position="99"/>
        <end position="119"/>
    </location>
</feature>
<feature type="transmembrane region" description="Helical" evidence="1">
    <location>
        <begin position="124"/>
        <end position="144"/>
    </location>
</feature>
<feature type="transmembrane region" description="Helical" evidence="1">
    <location>
        <begin position="149"/>
        <end position="169"/>
    </location>
</feature>
<feature type="transmembrane region" description="Helical" evidence="1">
    <location>
        <begin position="183"/>
        <end position="203"/>
    </location>
</feature>
<feature type="transmembrane region" description="Helical" evidence="1">
    <location>
        <begin position="227"/>
        <end position="247"/>
    </location>
</feature>
<feature type="transmembrane region" description="Helical" evidence="1">
    <location>
        <begin position="295"/>
        <end position="315"/>
    </location>
</feature>
<feature type="transmembrane region" description="Helical" evidence="1">
    <location>
        <begin position="323"/>
        <end position="343"/>
    </location>
</feature>
<feature type="transmembrane region" description="Helical" evidence="1">
    <location>
        <begin position="354"/>
        <end position="374"/>
    </location>
</feature>
<feature type="transmembrane region" description="Helical" evidence="1">
    <location>
        <begin position="395"/>
        <end position="415"/>
    </location>
</feature>
<feature type="transmembrane region" description="Helical" evidence="1">
    <location>
        <begin position="418"/>
        <end position="438"/>
    </location>
</feature>
<feature type="transmembrane region" description="Helical" evidence="1">
    <location>
        <begin position="484"/>
        <end position="504"/>
    </location>
</feature>
<protein>
    <recommendedName>
        <fullName evidence="1">NAD(P)H-quinone oxidoreductase subunit 2 B, chloroplastic</fullName>
        <ecNumber evidence="1">7.1.1.-</ecNumber>
    </recommendedName>
    <alternativeName>
        <fullName evidence="1">NAD(P)H dehydrogenase, subunit 2 B</fullName>
    </alternativeName>
    <alternativeName>
        <fullName evidence="1">NADH-plastoquinone oxidoreductase subunit 2 B</fullName>
    </alternativeName>
</protein>
<reference key="1">
    <citation type="journal article" date="2002" name="Mol. Biol. Evol.">
        <title>The plastid chromosome of Atropa belladonna and its comparison with that of Nicotiana tabacum: the role of RNA editing in generating divergence in the process of plant speciation.</title>
        <authorList>
            <person name="Schmitz-Linneweber C."/>
            <person name="Regel R."/>
            <person name="Du T.G."/>
            <person name="Hupfer H."/>
            <person name="Herrmann R.G."/>
            <person name="Maier R.M."/>
        </authorList>
    </citation>
    <scope>NUCLEOTIDE SEQUENCE [LARGE SCALE GENOMIC DNA]</scope>
    <source>
        <strain>cv. Ab5p(kan)</strain>
    </source>
</reference>
<comment type="function">
    <text evidence="1">NDH shuttles electrons from NAD(P)H:plastoquinone, via FMN and iron-sulfur (Fe-S) centers, to quinones in the photosynthetic chain and possibly in a chloroplast respiratory chain. The immediate electron acceptor for the enzyme in this species is believed to be plastoquinone. Couples the redox reaction to proton translocation, and thus conserves the redox energy in a proton gradient.</text>
</comment>
<comment type="catalytic activity">
    <reaction evidence="1">
        <text>a plastoquinone + NADH + (n+1) H(+)(in) = a plastoquinol + NAD(+) + n H(+)(out)</text>
        <dbReference type="Rhea" id="RHEA:42608"/>
        <dbReference type="Rhea" id="RHEA-COMP:9561"/>
        <dbReference type="Rhea" id="RHEA-COMP:9562"/>
        <dbReference type="ChEBI" id="CHEBI:15378"/>
        <dbReference type="ChEBI" id="CHEBI:17757"/>
        <dbReference type="ChEBI" id="CHEBI:57540"/>
        <dbReference type="ChEBI" id="CHEBI:57945"/>
        <dbReference type="ChEBI" id="CHEBI:62192"/>
    </reaction>
</comment>
<comment type="catalytic activity">
    <reaction evidence="1">
        <text>a plastoquinone + NADPH + (n+1) H(+)(in) = a plastoquinol + NADP(+) + n H(+)(out)</text>
        <dbReference type="Rhea" id="RHEA:42612"/>
        <dbReference type="Rhea" id="RHEA-COMP:9561"/>
        <dbReference type="Rhea" id="RHEA-COMP:9562"/>
        <dbReference type="ChEBI" id="CHEBI:15378"/>
        <dbReference type="ChEBI" id="CHEBI:17757"/>
        <dbReference type="ChEBI" id="CHEBI:57783"/>
        <dbReference type="ChEBI" id="CHEBI:58349"/>
        <dbReference type="ChEBI" id="CHEBI:62192"/>
    </reaction>
</comment>
<comment type="subunit">
    <text evidence="1">NDH is composed of at least 16 different subunits, 5 of which are encoded in the nucleus.</text>
</comment>
<comment type="subcellular location">
    <subcellularLocation>
        <location evidence="1">Plastid</location>
        <location evidence="1">Chloroplast thylakoid membrane</location>
        <topology evidence="1">Multi-pass membrane protein</topology>
    </subcellularLocation>
</comment>
<comment type="similarity">
    <text evidence="1">Belongs to the complex I subunit 2 family.</text>
</comment>
<gene>
    <name evidence="1" type="primary">ndhB2</name>
</gene>
<dbReference type="EC" id="7.1.1.-" evidence="1"/>
<dbReference type="EMBL" id="AJ316582">
    <property type="protein sequence ID" value="CAC88106.1"/>
    <property type="molecule type" value="Genomic_DNA"/>
</dbReference>
<dbReference type="SMR" id="P0CC35"/>
<dbReference type="GO" id="GO:0009535">
    <property type="term" value="C:chloroplast thylakoid membrane"/>
    <property type="evidence" value="ECO:0007669"/>
    <property type="project" value="UniProtKB-SubCell"/>
</dbReference>
<dbReference type="GO" id="GO:0008137">
    <property type="term" value="F:NADH dehydrogenase (ubiquinone) activity"/>
    <property type="evidence" value="ECO:0007669"/>
    <property type="project" value="InterPro"/>
</dbReference>
<dbReference type="GO" id="GO:0048038">
    <property type="term" value="F:quinone binding"/>
    <property type="evidence" value="ECO:0007669"/>
    <property type="project" value="UniProtKB-KW"/>
</dbReference>
<dbReference type="GO" id="GO:0042773">
    <property type="term" value="P:ATP synthesis coupled electron transport"/>
    <property type="evidence" value="ECO:0007669"/>
    <property type="project" value="InterPro"/>
</dbReference>
<dbReference type="GO" id="GO:0019684">
    <property type="term" value="P:photosynthesis, light reaction"/>
    <property type="evidence" value="ECO:0007669"/>
    <property type="project" value="UniProtKB-UniRule"/>
</dbReference>
<dbReference type="HAMAP" id="MF_00445">
    <property type="entry name" value="NDH1_NuoN_1"/>
    <property type="match status" value="1"/>
</dbReference>
<dbReference type="InterPro" id="IPR010096">
    <property type="entry name" value="NADH-Q_OxRdtase_suN/2"/>
</dbReference>
<dbReference type="InterPro" id="IPR001750">
    <property type="entry name" value="ND/Mrp_TM"/>
</dbReference>
<dbReference type="InterPro" id="IPR045693">
    <property type="entry name" value="Ndh2_N"/>
</dbReference>
<dbReference type="NCBIfam" id="TIGR01770">
    <property type="entry name" value="NDH_I_N"/>
    <property type="match status" value="1"/>
</dbReference>
<dbReference type="NCBIfam" id="NF002701">
    <property type="entry name" value="PRK02504.1"/>
    <property type="match status" value="1"/>
</dbReference>
<dbReference type="PANTHER" id="PTHR22773">
    <property type="entry name" value="NADH DEHYDROGENASE"/>
    <property type="match status" value="1"/>
</dbReference>
<dbReference type="Pfam" id="PF19530">
    <property type="entry name" value="Ndh2_N"/>
    <property type="match status" value="1"/>
</dbReference>
<dbReference type="Pfam" id="PF00361">
    <property type="entry name" value="Proton_antipo_M"/>
    <property type="match status" value="1"/>
</dbReference>
<dbReference type="PRINTS" id="PR01434">
    <property type="entry name" value="NADHDHGNASE5"/>
</dbReference>
<accession>P0CC35</accession>
<accession>Q8RVD7</accession>
<name>NU2C2_ATRBE</name>